<organism>
    <name type="scientific">Bradyrhizobium sp. (strain ORS 278)</name>
    <dbReference type="NCBI Taxonomy" id="114615"/>
    <lineage>
        <taxon>Bacteria</taxon>
        <taxon>Pseudomonadati</taxon>
        <taxon>Pseudomonadota</taxon>
        <taxon>Alphaproteobacteria</taxon>
        <taxon>Hyphomicrobiales</taxon>
        <taxon>Nitrobacteraceae</taxon>
        <taxon>Bradyrhizobium</taxon>
    </lineage>
</organism>
<protein>
    <recommendedName>
        <fullName evidence="1">UDP-N-acetylglucosamine--N-acetylmuramyl-(pentapeptide) pyrophosphoryl-undecaprenol N-acetylglucosamine transferase</fullName>
        <ecNumber evidence="1">2.4.1.227</ecNumber>
    </recommendedName>
    <alternativeName>
        <fullName evidence="1">Undecaprenyl-PP-MurNAc-pentapeptide-UDPGlcNAc GlcNAc transferase</fullName>
    </alternativeName>
</protein>
<comment type="function">
    <text evidence="1">Cell wall formation. Catalyzes the transfer of a GlcNAc subunit on undecaprenyl-pyrophosphoryl-MurNAc-pentapeptide (lipid intermediate I) to form undecaprenyl-pyrophosphoryl-MurNAc-(pentapeptide)GlcNAc (lipid intermediate II).</text>
</comment>
<comment type="catalytic activity">
    <reaction evidence="1">
        <text>di-trans,octa-cis-undecaprenyl diphospho-N-acetyl-alpha-D-muramoyl-L-alanyl-D-glutamyl-meso-2,6-diaminopimeloyl-D-alanyl-D-alanine + UDP-N-acetyl-alpha-D-glucosamine = di-trans,octa-cis-undecaprenyl diphospho-[N-acetyl-alpha-D-glucosaminyl-(1-&gt;4)]-N-acetyl-alpha-D-muramoyl-L-alanyl-D-glutamyl-meso-2,6-diaminopimeloyl-D-alanyl-D-alanine + UDP + H(+)</text>
        <dbReference type="Rhea" id="RHEA:31227"/>
        <dbReference type="ChEBI" id="CHEBI:15378"/>
        <dbReference type="ChEBI" id="CHEBI:57705"/>
        <dbReference type="ChEBI" id="CHEBI:58223"/>
        <dbReference type="ChEBI" id="CHEBI:61387"/>
        <dbReference type="ChEBI" id="CHEBI:61388"/>
        <dbReference type="EC" id="2.4.1.227"/>
    </reaction>
</comment>
<comment type="pathway">
    <text evidence="1">Cell wall biogenesis; peptidoglycan biosynthesis.</text>
</comment>
<comment type="subcellular location">
    <subcellularLocation>
        <location evidence="1">Cell inner membrane</location>
        <topology evidence="1">Peripheral membrane protein</topology>
        <orientation evidence="1">Cytoplasmic side</orientation>
    </subcellularLocation>
</comment>
<comment type="similarity">
    <text evidence="1">Belongs to the glycosyltransferase 28 family. MurG subfamily.</text>
</comment>
<proteinExistence type="inferred from homology"/>
<evidence type="ECO:0000255" key="1">
    <source>
        <dbReference type="HAMAP-Rule" id="MF_00033"/>
    </source>
</evidence>
<name>MURG_BRASO</name>
<dbReference type="EC" id="2.4.1.227" evidence="1"/>
<dbReference type="EMBL" id="CU234118">
    <property type="protein sequence ID" value="CAL79329.1"/>
    <property type="molecule type" value="Genomic_DNA"/>
</dbReference>
<dbReference type="RefSeq" id="WP_012029236.1">
    <property type="nucleotide sequence ID" value="NC_009445.1"/>
</dbReference>
<dbReference type="SMR" id="A4YZK3"/>
<dbReference type="STRING" id="114615.BRADO5659"/>
<dbReference type="CAZy" id="GT28">
    <property type="family name" value="Glycosyltransferase Family 28"/>
</dbReference>
<dbReference type="KEGG" id="bra:BRADO5659"/>
<dbReference type="eggNOG" id="COG0707">
    <property type="taxonomic scope" value="Bacteria"/>
</dbReference>
<dbReference type="HOGENOM" id="CLU_037404_2_1_5"/>
<dbReference type="UniPathway" id="UPA00219"/>
<dbReference type="Proteomes" id="UP000001994">
    <property type="component" value="Chromosome"/>
</dbReference>
<dbReference type="GO" id="GO:0005886">
    <property type="term" value="C:plasma membrane"/>
    <property type="evidence" value="ECO:0007669"/>
    <property type="project" value="UniProtKB-SubCell"/>
</dbReference>
<dbReference type="GO" id="GO:0051991">
    <property type="term" value="F:UDP-N-acetyl-D-glucosamine:N-acetylmuramoyl-L-alanyl-D-glutamyl-meso-2,6-diaminopimelyl-D-alanyl-D-alanine-diphosphoundecaprenol 4-beta-N-acetylglucosaminlytransferase activity"/>
    <property type="evidence" value="ECO:0007669"/>
    <property type="project" value="RHEA"/>
</dbReference>
<dbReference type="GO" id="GO:0050511">
    <property type="term" value="F:undecaprenyldiphospho-muramoylpentapeptide beta-N-acetylglucosaminyltransferase activity"/>
    <property type="evidence" value="ECO:0007669"/>
    <property type="project" value="UniProtKB-UniRule"/>
</dbReference>
<dbReference type="GO" id="GO:0005975">
    <property type="term" value="P:carbohydrate metabolic process"/>
    <property type="evidence" value="ECO:0007669"/>
    <property type="project" value="InterPro"/>
</dbReference>
<dbReference type="GO" id="GO:0051301">
    <property type="term" value="P:cell division"/>
    <property type="evidence" value="ECO:0007669"/>
    <property type="project" value="UniProtKB-KW"/>
</dbReference>
<dbReference type="GO" id="GO:0071555">
    <property type="term" value="P:cell wall organization"/>
    <property type="evidence" value="ECO:0007669"/>
    <property type="project" value="UniProtKB-KW"/>
</dbReference>
<dbReference type="GO" id="GO:0030259">
    <property type="term" value="P:lipid glycosylation"/>
    <property type="evidence" value="ECO:0007669"/>
    <property type="project" value="UniProtKB-UniRule"/>
</dbReference>
<dbReference type="GO" id="GO:0009252">
    <property type="term" value="P:peptidoglycan biosynthetic process"/>
    <property type="evidence" value="ECO:0007669"/>
    <property type="project" value="UniProtKB-UniRule"/>
</dbReference>
<dbReference type="GO" id="GO:0008360">
    <property type="term" value="P:regulation of cell shape"/>
    <property type="evidence" value="ECO:0007669"/>
    <property type="project" value="UniProtKB-KW"/>
</dbReference>
<dbReference type="CDD" id="cd03785">
    <property type="entry name" value="GT28_MurG"/>
    <property type="match status" value="1"/>
</dbReference>
<dbReference type="Gene3D" id="3.40.50.2000">
    <property type="entry name" value="Glycogen Phosphorylase B"/>
    <property type="match status" value="2"/>
</dbReference>
<dbReference type="HAMAP" id="MF_00033">
    <property type="entry name" value="MurG"/>
    <property type="match status" value="1"/>
</dbReference>
<dbReference type="InterPro" id="IPR006009">
    <property type="entry name" value="GlcNAc_MurG"/>
</dbReference>
<dbReference type="InterPro" id="IPR007235">
    <property type="entry name" value="Glyco_trans_28_C"/>
</dbReference>
<dbReference type="InterPro" id="IPR004276">
    <property type="entry name" value="GlycoTrans_28_N"/>
</dbReference>
<dbReference type="NCBIfam" id="TIGR01133">
    <property type="entry name" value="murG"/>
    <property type="match status" value="1"/>
</dbReference>
<dbReference type="PANTHER" id="PTHR21015:SF22">
    <property type="entry name" value="GLYCOSYLTRANSFERASE"/>
    <property type="match status" value="1"/>
</dbReference>
<dbReference type="PANTHER" id="PTHR21015">
    <property type="entry name" value="UDP-N-ACETYLGLUCOSAMINE--N-ACETYLMURAMYL-(PENTAPEPTIDE) PYROPHOSPHORYL-UNDECAPRENOL N-ACETYLGLUCOSAMINE TRANSFERASE 1"/>
    <property type="match status" value="1"/>
</dbReference>
<dbReference type="Pfam" id="PF04101">
    <property type="entry name" value="Glyco_tran_28_C"/>
    <property type="match status" value="1"/>
</dbReference>
<dbReference type="Pfam" id="PF03033">
    <property type="entry name" value="Glyco_transf_28"/>
    <property type="match status" value="1"/>
</dbReference>
<dbReference type="SUPFAM" id="SSF53756">
    <property type="entry name" value="UDP-Glycosyltransferase/glycogen phosphorylase"/>
    <property type="match status" value="1"/>
</dbReference>
<accession>A4YZK3</accession>
<sequence length="367" mass="38218">MISSAPLILLAAGGTGGHLFPAEALGVELIKRGYRVRLVTDARALKYSGLFTKDMIDVVPSETVRSRSPVALARTALLLGTGTLAAFNLMRRLKPAAVIGFGGYPTVPPLLAARLAGVPSLIHDANAVLGRANRFLSAHVKAIATSLPGVLDRDPALAGKTTTVGTPMRPAILEAAAVPYVAPETAGPLRLLVVGGSQGARVMSDIVPGAIERLEPALWSRLVLAQQVRQEDMARVRAVYDRLKINAELQPFFTDLPARLAANHLVISRSGAGTVAELAAIGRPSILVPLPGAIDQDQFANAGVLSDANAAIRIVQTAFTSDRLASEISSLAAEPTRLAAMAQAARAAGRLDAAERLADLVAKTAGL</sequence>
<gene>
    <name evidence="1" type="primary">murG</name>
    <name type="ordered locus">BRADO5659</name>
</gene>
<keyword id="KW-0131">Cell cycle</keyword>
<keyword id="KW-0132">Cell division</keyword>
<keyword id="KW-0997">Cell inner membrane</keyword>
<keyword id="KW-1003">Cell membrane</keyword>
<keyword id="KW-0133">Cell shape</keyword>
<keyword id="KW-0961">Cell wall biogenesis/degradation</keyword>
<keyword id="KW-0328">Glycosyltransferase</keyword>
<keyword id="KW-0472">Membrane</keyword>
<keyword id="KW-0573">Peptidoglycan synthesis</keyword>
<keyword id="KW-1185">Reference proteome</keyword>
<keyword id="KW-0808">Transferase</keyword>
<feature type="chain" id="PRO_0000315074" description="UDP-N-acetylglucosamine--N-acetylmuramyl-(pentapeptide) pyrophosphoryl-undecaprenol N-acetylglucosamine transferase">
    <location>
        <begin position="1"/>
        <end position="367"/>
    </location>
</feature>
<feature type="binding site" evidence="1">
    <location>
        <begin position="15"/>
        <end position="17"/>
    </location>
    <ligand>
        <name>UDP-N-acetyl-alpha-D-glucosamine</name>
        <dbReference type="ChEBI" id="CHEBI:57705"/>
    </ligand>
</feature>
<feature type="binding site" evidence="1">
    <location>
        <position position="126"/>
    </location>
    <ligand>
        <name>UDP-N-acetyl-alpha-D-glucosamine</name>
        <dbReference type="ChEBI" id="CHEBI:57705"/>
    </ligand>
</feature>
<feature type="binding site" evidence="1">
    <location>
        <position position="169"/>
    </location>
    <ligand>
        <name>UDP-N-acetyl-alpha-D-glucosamine</name>
        <dbReference type="ChEBI" id="CHEBI:57705"/>
    </ligand>
</feature>
<feature type="binding site" evidence="1">
    <location>
        <position position="197"/>
    </location>
    <ligand>
        <name>UDP-N-acetyl-alpha-D-glucosamine</name>
        <dbReference type="ChEBI" id="CHEBI:57705"/>
    </ligand>
</feature>
<feature type="binding site" evidence="1">
    <location>
        <position position="298"/>
    </location>
    <ligand>
        <name>UDP-N-acetyl-alpha-D-glucosamine</name>
        <dbReference type="ChEBI" id="CHEBI:57705"/>
    </ligand>
</feature>
<reference key="1">
    <citation type="journal article" date="2007" name="Science">
        <title>Legumes symbioses: absence of nod genes in photosynthetic bradyrhizobia.</title>
        <authorList>
            <person name="Giraud E."/>
            <person name="Moulin L."/>
            <person name="Vallenet D."/>
            <person name="Barbe V."/>
            <person name="Cytryn E."/>
            <person name="Avarre J.-C."/>
            <person name="Jaubert M."/>
            <person name="Simon D."/>
            <person name="Cartieaux F."/>
            <person name="Prin Y."/>
            <person name="Bena G."/>
            <person name="Hannibal L."/>
            <person name="Fardoux J."/>
            <person name="Kojadinovic M."/>
            <person name="Vuillet L."/>
            <person name="Lajus A."/>
            <person name="Cruveiller S."/>
            <person name="Rouy Z."/>
            <person name="Mangenot S."/>
            <person name="Segurens B."/>
            <person name="Dossat C."/>
            <person name="Franck W.L."/>
            <person name="Chang W.-S."/>
            <person name="Saunders E."/>
            <person name="Bruce D."/>
            <person name="Richardson P."/>
            <person name="Normand P."/>
            <person name="Dreyfus B."/>
            <person name="Pignol D."/>
            <person name="Stacey G."/>
            <person name="Emerich D."/>
            <person name="Vermeglio A."/>
            <person name="Medigue C."/>
            <person name="Sadowsky M."/>
        </authorList>
    </citation>
    <scope>NUCLEOTIDE SEQUENCE [LARGE SCALE GENOMIC DNA]</scope>
    <source>
        <strain>ORS 278</strain>
    </source>
</reference>